<feature type="chain" id="PRO_0000078996" description="Nuclear export protein">
    <location>
        <begin position="1"/>
        <end position="121"/>
    </location>
</feature>
<feature type="short sequence motif" description="Nuclear export signal" evidence="1">
    <location>
        <begin position="12"/>
        <end position="21"/>
    </location>
</feature>
<feature type="short sequence motif" description="Nuclear export signal" evidence="1">
    <location>
        <begin position="85"/>
        <end position="94"/>
    </location>
</feature>
<protein>
    <recommendedName>
        <fullName evidence="1">Nuclear export protein</fullName>
        <shortName evidence="1">NEP</shortName>
    </recommendedName>
    <alternativeName>
        <fullName evidence="1">Non-structural protein 2</fullName>
        <shortName evidence="1">NS2</shortName>
    </alternativeName>
</protein>
<comment type="function">
    <text evidence="1">Mediates the nuclear export of encapsidated genomic RNAs (ribonucleoproteins, RNPs). Acts as an adapter between viral RNPs complexes and the nuclear export machinery of the cell. Possesses no intrinsic RNA-binding activity, but includes a C-terminal M1-binding domain. This domain is believed to allow recognition of RNPs bound to the protein M1. Since protein M1 is not available in large quantities before late stages of infection, such an indirect recognition mechanism probably ensures that genomic RNPs are not exported from the host nucleus until sufficient quantities of viral mRNA and progeny genomic RNA have been synthesized. Furthermore, the RNPs enter the host cytoplasm only when associated with the M1 protein that is necessary to guide them to the plasma membrane. May down-regulate viral RNA synthesis when overproduced.</text>
</comment>
<comment type="subunit">
    <text evidence="1">Interacts with protein M1. May interact with host nucleoporin RAB/HRB and exportin XPO1/CRM1.</text>
</comment>
<comment type="subcellular location">
    <subcellularLocation>
        <location evidence="1">Virion</location>
    </subcellularLocation>
    <subcellularLocation>
        <location evidence="1">Host nucleus</location>
    </subcellularLocation>
</comment>
<comment type="alternative products">
    <event type="alternative splicing"/>
    <isoform>
        <id>P13145-1</id>
        <name>NEP</name>
        <name>NS2</name>
        <sequence type="displayed"/>
    </isoform>
    <isoform>
        <id>P13137-1</id>
        <name>NS1</name>
        <sequence type="external"/>
    </isoform>
</comment>
<comment type="miscellaneous">
    <text>Average number present in a viral particle is estimated to be 130-200 molecules.</text>
</comment>
<comment type="similarity">
    <text evidence="1">Belongs to the influenza viruses NEP family.</text>
</comment>
<dbReference type="EMBL" id="M25373">
    <property type="protein sequence ID" value="AAA43530.1"/>
    <property type="molecule type" value="Genomic_RNA"/>
</dbReference>
<dbReference type="PIR" id="B32663">
    <property type="entry name" value="MNIVB5"/>
</dbReference>
<dbReference type="SMR" id="P13145"/>
<dbReference type="GO" id="GO:0042025">
    <property type="term" value="C:host cell nucleus"/>
    <property type="evidence" value="ECO:0007669"/>
    <property type="project" value="UniProtKB-SubCell"/>
</dbReference>
<dbReference type="GO" id="GO:0044423">
    <property type="term" value="C:virion component"/>
    <property type="evidence" value="ECO:0007669"/>
    <property type="project" value="UniProtKB-UniRule"/>
</dbReference>
<dbReference type="GO" id="GO:0039675">
    <property type="term" value="P:exit of virus from host cell nucleus through nuclear pore"/>
    <property type="evidence" value="ECO:0007669"/>
    <property type="project" value="UniProtKB-UniRule"/>
</dbReference>
<dbReference type="Gene3D" id="1.10.287.230">
    <property type="match status" value="1"/>
</dbReference>
<dbReference type="HAMAP" id="MF_04067">
    <property type="entry name" value="INFV_NEP"/>
    <property type="match status" value="1"/>
</dbReference>
<dbReference type="InterPro" id="IPR000968">
    <property type="entry name" value="Flu_NS2"/>
</dbReference>
<dbReference type="Pfam" id="PF00601">
    <property type="entry name" value="Flu_NS2"/>
    <property type="match status" value="1"/>
</dbReference>
<dbReference type="SUPFAM" id="SSF101156">
    <property type="entry name" value="Nonstructural protein ns2, Nep, M1-binding domain"/>
    <property type="match status" value="1"/>
</dbReference>
<evidence type="ECO:0000255" key="1">
    <source>
        <dbReference type="HAMAP-Rule" id="MF_04067"/>
    </source>
</evidence>
<proteinExistence type="inferred from homology"/>
<organismHost>
    <name type="scientific">Aves</name>
    <dbReference type="NCBI Taxonomy" id="8782"/>
</organismHost>
<organismHost>
    <name type="scientific">Equus caballus</name>
    <name type="common">Horse</name>
    <dbReference type="NCBI Taxonomy" id="9796"/>
</organismHost>
<reference key="1">
    <citation type="journal article" date="1989" name="Virology">
        <title>The B allele of the NS gene of avian influenza viruses, but not the A allele, attenuates a human influenza A virus for squirrel monkeys.</title>
        <authorList>
            <person name="Treanor J.J."/>
            <person name="Snyder M.H."/>
            <person name="London W.T."/>
            <person name="Murphy B.R."/>
        </authorList>
    </citation>
    <scope>NUCLEOTIDE SEQUENCE [GENOMIC RNA]</scope>
</reference>
<organism>
    <name type="scientific">Influenza A virus (strain A/Mallard/Alberta/88/1976 H3N8)</name>
    <dbReference type="NCBI Taxonomy" id="11430"/>
    <lineage>
        <taxon>Viruses</taxon>
        <taxon>Riboviria</taxon>
        <taxon>Orthornavirae</taxon>
        <taxon>Negarnaviricota</taxon>
        <taxon>Polyploviricotina</taxon>
        <taxon>Insthoviricetes</taxon>
        <taxon>Articulavirales</taxon>
        <taxon>Orthomyxoviridae</taxon>
        <taxon>Alphainfluenzavirus</taxon>
        <taxon>Alphainfluenzavirus influenzae</taxon>
        <taxon>Influenza A virus</taxon>
    </lineage>
</organism>
<keyword id="KW-0025">Alternative splicing</keyword>
<keyword id="KW-1048">Host nucleus</keyword>
<keyword id="KW-0945">Host-virus interaction</keyword>
<keyword id="KW-0813">Transport</keyword>
<keyword id="KW-0946">Virion</keyword>
<name>NEP_I76A5</name>
<sequence>MDSNTVTSFQDILQRMSKMQLESSSVDLNGMITQFERLKIYRDSLGESVMRMGDLHSLQSRNATWREELSQKFEEIRWLIAECRNILTKTENSFEQITFLQALQLLLEVESEIRTFSFQLI</sequence>
<accession>P13145</accession>
<gene>
    <name evidence="1" type="primary">NS</name>
</gene>